<keyword id="KW-0342">GTP-binding</keyword>
<keyword id="KW-0378">Hydrolase</keyword>
<keyword id="KW-0479">Metal-binding</keyword>
<keyword id="KW-0547">Nucleotide-binding</keyword>
<keyword id="KW-0686">Riboflavin biosynthesis</keyword>
<keyword id="KW-0862">Zinc</keyword>
<comment type="function">
    <text evidence="1">Catalyzes the conversion of GTP to 2,5-diamino-6-ribosylamino-4(3H)-pyrimidinone 5'-phosphate (DARP), formate and pyrophosphate.</text>
</comment>
<comment type="catalytic activity">
    <reaction evidence="1">
        <text>GTP + 4 H2O = 2,5-diamino-6-hydroxy-4-(5-phosphoribosylamino)-pyrimidine + formate + 2 phosphate + 3 H(+)</text>
        <dbReference type="Rhea" id="RHEA:23704"/>
        <dbReference type="ChEBI" id="CHEBI:15377"/>
        <dbReference type="ChEBI" id="CHEBI:15378"/>
        <dbReference type="ChEBI" id="CHEBI:15740"/>
        <dbReference type="ChEBI" id="CHEBI:37565"/>
        <dbReference type="ChEBI" id="CHEBI:43474"/>
        <dbReference type="ChEBI" id="CHEBI:58614"/>
        <dbReference type="EC" id="3.5.4.25"/>
    </reaction>
</comment>
<comment type="cofactor">
    <cofactor evidence="1">
        <name>Zn(2+)</name>
        <dbReference type="ChEBI" id="CHEBI:29105"/>
    </cofactor>
    <text evidence="1">Binds 1 zinc ion per subunit.</text>
</comment>
<comment type="pathway">
    <text evidence="1">Cofactor biosynthesis; riboflavin biosynthesis; 5-amino-6-(D-ribitylamino)uracil from GTP: step 1/4.</text>
</comment>
<comment type="subunit">
    <text evidence="1">Homodimer.</text>
</comment>
<comment type="similarity">
    <text evidence="1">Belongs to the GTP cyclohydrolase II family.</text>
</comment>
<feature type="chain" id="PRO_1000098265" description="GTP cyclohydrolase-2">
    <location>
        <begin position="1"/>
        <end position="196"/>
    </location>
</feature>
<feature type="active site" description="Proton acceptor" evidence="1">
    <location>
        <position position="126"/>
    </location>
</feature>
<feature type="active site" description="Nucleophile" evidence="1">
    <location>
        <position position="128"/>
    </location>
</feature>
<feature type="binding site" evidence="1">
    <location>
        <begin position="49"/>
        <end position="53"/>
    </location>
    <ligand>
        <name>GTP</name>
        <dbReference type="ChEBI" id="CHEBI:37565"/>
    </ligand>
</feature>
<feature type="binding site" evidence="1">
    <location>
        <position position="54"/>
    </location>
    <ligand>
        <name>Zn(2+)</name>
        <dbReference type="ChEBI" id="CHEBI:29105"/>
        <note>catalytic</note>
    </ligand>
</feature>
<feature type="binding site" evidence="1">
    <location>
        <position position="65"/>
    </location>
    <ligand>
        <name>Zn(2+)</name>
        <dbReference type="ChEBI" id="CHEBI:29105"/>
        <note>catalytic</note>
    </ligand>
</feature>
<feature type="binding site" evidence="1">
    <location>
        <position position="67"/>
    </location>
    <ligand>
        <name>Zn(2+)</name>
        <dbReference type="ChEBI" id="CHEBI:29105"/>
        <note>catalytic</note>
    </ligand>
</feature>
<feature type="binding site" evidence="1">
    <location>
        <position position="70"/>
    </location>
    <ligand>
        <name>GTP</name>
        <dbReference type="ChEBI" id="CHEBI:37565"/>
    </ligand>
</feature>
<feature type="binding site" evidence="1">
    <location>
        <begin position="92"/>
        <end position="94"/>
    </location>
    <ligand>
        <name>GTP</name>
        <dbReference type="ChEBI" id="CHEBI:37565"/>
    </ligand>
</feature>
<feature type="binding site" evidence="1">
    <location>
        <position position="114"/>
    </location>
    <ligand>
        <name>GTP</name>
        <dbReference type="ChEBI" id="CHEBI:37565"/>
    </ligand>
</feature>
<feature type="binding site" evidence="1">
    <location>
        <position position="149"/>
    </location>
    <ligand>
        <name>GTP</name>
        <dbReference type="ChEBI" id="CHEBI:37565"/>
    </ligand>
</feature>
<feature type="binding site" evidence="1">
    <location>
        <position position="154"/>
    </location>
    <ligand>
        <name>GTP</name>
        <dbReference type="ChEBI" id="CHEBI:37565"/>
    </ligand>
</feature>
<name>RIBA_ECODH</name>
<proteinExistence type="inferred from homology"/>
<reference key="1">
    <citation type="journal article" date="2008" name="J. Bacteriol.">
        <title>The complete genome sequence of Escherichia coli DH10B: insights into the biology of a laboratory workhorse.</title>
        <authorList>
            <person name="Durfee T."/>
            <person name="Nelson R."/>
            <person name="Baldwin S."/>
            <person name="Plunkett G. III"/>
            <person name="Burland V."/>
            <person name="Mau B."/>
            <person name="Petrosino J.F."/>
            <person name="Qin X."/>
            <person name="Muzny D.M."/>
            <person name="Ayele M."/>
            <person name="Gibbs R.A."/>
            <person name="Csorgo B."/>
            <person name="Posfai G."/>
            <person name="Weinstock G.M."/>
            <person name="Blattner F.R."/>
        </authorList>
    </citation>
    <scope>NUCLEOTIDE SEQUENCE [LARGE SCALE GENOMIC DNA]</scope>
    <source>
        <strain>K12 / DH10B</strain>
    </source>
</reference>
<sequence>MQLKRVAEAKLPTPWGDFLMVGFEELATGHDHVALVYGDISGHTPVLARVHSECLTGDALFSLRCDCGFQLEAALTQIAEEGRGILLYHRQEGRNIGLLNKIRAYALQDQGYDTVEANHQLGFAADERDFTLCADMFKLLGVNEVRLLTNNPKKVEILTEAGINIVERVPLIVGRNPNNEHYLDTKAEKMGHLLNK</sequence>
<evidence type="ECO:0000255" key="1">
    <source>
        <dbReference type="HAMAP-Rule" id="MF_00179"/>
    </source>
</evidence>
<dbReference type="EC" id="3.5.4.25" evidence="1"/>
<dbReference type="EMBL" id="CP000948">
    <property type="protein sequence ID" value="ACB02498.1"/>
    <property type="molecule type" value="Genomic_DNA"/>
</dbReference>
<dbReference type="RefSeq" id="WP_001176295.1">
    <property type="nucleotide sequence ID" value="NC_010473.1"/>
</dbReference>
<dbReference type="SMR" id="B1XBM8"/>
<dbReference type="GeneID" id="86946614"/>
<dbReference type="KEGG" id="ecd:ECDH10B_1394"/>
<dbReference type="HOGENOM" id="CLU_020273_2_1_6"/>
<dbReference type="UniPathway" id="UPA00275">
    <property type="reaction ID" value="UER00400"/>
</dbReference>
<dbReference type="GO" id="GO:0005829">
    <property type="term" value="C:cytosol"/>
    <property type="evidence" value="ECO:0007669"/>
    <property type="project" value="TreeGrafter"/>
</dbReference>
<dbReference type="GO" id="GO:0005525">
    <property type="term" value="F:GTP binding"/>
    <property type="evidence" value="ECO:0007669"/>
    <property type="project" value="UniProtKB-KW"/>
</dbReference>
<dbReference type="GO" id="GO:0003935">
    <property type="term" value="F:GTP cyclohydrolase II activity"/>
    <property type="evidence" value="ECO:0007669"/>
    <property type="project" value="UniProtKB-UniRule"/>
</dbReference>
<dbReference type="GO" id="GO:0008270">
    <property type="term" value="F:zinc ion binding"/>
    <property type="evidence" value="ECO:0007669"/>
    <property type="project" value="UniProtKB-UniRule"/>
</dbReference>
<dbReference type="GO" id="GO:0009231">
    <property type="term" value="P:riboflavin biosynthetic process"/>
    <property type="evidence" value="ECO:0007669"/>
    <property type="project" value="UniProtKB-UniRule"/>
</dbReference>
<dbReference type="CDD" id="cd00641">
    <property type="entry name" value="GTP_cyclohydro2"/>
    <property type="match status" value="1"/>
</dbReference>
<dbReference type="FunFam" id="3.40.50.10990:FF:000002">
    <property type="entry name" value="GTP cyclohydrolase-2"/>
    <property type="match status" value="1"/>
</dbReference>
<dbReference type="Gene3D" id="3.40.50.10990">
    <property type="entry name" value="GTP cyclohydrolase II"/>
    <property type="match status" value="1"/>
</dbReference>
<dbReference type="HAMAP" id="MF_00179">
    <property type="entry name" value="RibA"/>
    <property type="match status" value="1"/>
</dbReference>
<dbReference type="InterPro" id="IPR032677">
    <property type="entry name" value="GTP_cyclohydro_II"/>
</dbReference>
<dbReference type="InterPro" id="IPR000926">
    <property type="entry name" value="RibA"/>
</dbReference>
<dbReference type="InterPro" id="IPR036144">
    <property type="entry name" value="RibA-like_sf"/>
</dbReference>
<dbReference type="NCBIfam" id="NF001591">
    <property type="entry name" value="PRK00393.1"/>
    <property type="match status" value="1"/>
</dbReference>
<dbReference type="NCBIfam" id="TIGR00505">
    <property type="entry name" value="ribA"/>
    <property type="match status" value="1"/>
</dbReference>
<dbReference type="PANTHER" id="PTHR21327:SF18">
    <property type="entry name" value="3,4-DIHYDROXY-2-BUTANONE 4-PHOSPHATE SYNTHASE"/>
    <property type="match status" value="1"/>
</dbReference>
<dbReference type="PANTHER" id="PTHR21327">
    <property type="entry name" value="GTP CYCLOHYDROLASE II-RELATED"/>
    <property type="match status" value="1"/>
</dbReference>
<dbReference type="Pfam" id="PF00925">
    <property type="entry name" value="GTP_cyclohydro2"/>
    <property type="match status" value="1"/>
</dbReference>
<dbReference type="SUPFAM" id="SSF142695">
    <property type="entry name" value="RibA-like"/>
    <property type="match status" value="1"/>
</dbReference>
<protein>
    <recommendedName>
        <fullName evidence="1">GTP cyclohydrolase-2</fullName>
        <ecNumber evidence="1">3.5.4.25</ecNumber>
    </recommendedName>
    <alternativeName>
        <fullName evidence="1">GTP cyclohydrolase II</fullName>
    </alternativeName>
</protein>
<accession>B1XBM8</accession>
<organism>
    <name type="scientific">Escherichia coli (strain K12 / DH10B)</name>
    <dbReference type="NCBI Taxonomy" id="316385"/>
    <lineage>
        <taxon>Bacteria</taxon>
        <taxon>Pseudomonadati</taxon>
        <taxon>Pseudomonadota</taxon>
        <taxon>Gammaproteobacteria</taxon>
        <taxon>Enterobacterales</taxon>
        <taxon>Enterobacteriaceae</taxon>
        <taxon>Escherichia</taxon>
    </lineage>
</organism>
<gene>
    <name evidence="1" type="primary">ribA</name>
    <name type="ordered locus">ECDH10B_1394</name>
</gene>